<feature type="chain" id="PRO_0000221738" description="Early E3A 10.5 kDa glycoprotein">
    <location>
        <begin position="1"/>
        <end position="93"/>
    </location>
</feature>
<feature type="transmembrane region" description="Helical" evidence="1">
    <location>
        <begin position="34"/>
        <end position="55"/>
    </location>
</feature>
<feature type="glycosylation site" description="N-linked (GlcNAc...) asparagine; by host" evidence="1">
    <location>
        <position position="3"/>
    </location>
</feature>
<dbReference type="EMBL" id="M73260">
    <property type="status" value="NOT_ANNOTATED_CDS"/>
    <property type="molecule type" value="Genomic_DNA"/>
</dbReference>
<dbReference type="EMBL" id="X03002">
    <property type="protein sequence ID" value="CAA26784.1"/>
    <property type="molecule type" value="Genomic_DNA"/>
</dbReference>
<dbReference type="PIR" id="A05245">
    <property type="entry name" value="ERAD53"/>
</dbReference>
<dbReference type="RefSeq" id="AP_000221.2">
    <property type="nucleotide sequence ID" value="AC_000008.1"/>
</dbReference>
<dbReference type="SMR" id="P17590"/>
<dbReference type="Proteomes" id="UP000004992">
    <property type="component" value="Genome"/>
</dbReference>
<dbReference type="GO" id="GO:0044200">
    <property type="term" value="C:host cell nuclear membrane"/>
    <property type="evidence" value="ECO:0007669"/>
    <property type="project" value="UniProtKB-SubCell"/>
</dbReference>
<dbReference type="GO" id="GO:0016020">
    <property type="term" value="C:membrane"/>
    <property type="evidence" value="ECO:0007669"/>
    <property type="project" value="UniProtKB-KW"/>
</dbReference>
<dbReference type="InterPro" id="IPR008652">
    <property type="entry name" value="Adenovirus_Type-2_E3A"/>
</dbReference>
<dbReference type="Pfam" id="PF05393">
    <property type="entry name" value="Hum_adeno_E3A"/>
    <property type="match status" value="1"/>
</dbReference>
<name>E311_ADE05</name>
<protein>
    <recommendedName>
        <fullName>Early E3A 10.5 kDa glycoprotein</fullName>
    </recommendedName>
</protein>
<evidence type="ECO:0000255" key="1"/>
<evidence type="ECO:0000305" key="2"/>
<reference key="1">
    <citation type="journal article" date="1985" name="Virology">
        <title>DNA sequence of the early E3 transcription unit of adenovirus 5.</title>
        <authorList>
            <person name="Cladaras C."/>
            <person name="Wold W.S.M."/>
        </authorList>
    </citation>
    <scope>NUCLEOTIDE SEQUENCE [GENOMIC DNA]</scope>
</reference>
<reference key="2">
    <citation type="journal article" date="1992" name="Virology">
        <title>The sequence of the genome of adenovirus type 5 and its comparison with the genome of adenovirus type 2.</title>
        <authorList>
            <person name="Chroboczek J."/>
            <person name="Bieber F."/>
            <person name="Jacrot B."/>
        </authorList>
    </citation>
    <scope>NUCLEOTIDE SEQUENCE [LARGE SCALE GENOMIC DNA]</scope>
</reference>
<organismHost>
    <name type="scientific">Homo sapiens</name>
    <name type="common">Human</name>
    <dbReference type="NCBI Taxonomy" id="9606"/>
</organismHost>
<comment type="subcellular location">
    <subcellularLocation>
        <location>Host nucleus membrane</location>
        <topology>Single-pass membrane protein</topology>
    </subcellularLocation>
</comment>
<comment type="PTM">
    <text>N-glycosylated and probably also O-glycosylated.</text>
</comment>
<comment type="similarity">
    <text evidence="2">Belongs to the adenoviridae E3A-1 family.</text>
</comment>
<sequence length="93" mass="10523">MTNTTNAAAATGLTSTTNTPQVSAFVNNWDNLGMWWFSIALMFVCLIIMWLICCLKRKRARPPIYSPIIVLHPNNDGIHRLDGLKHMFFSLTV</sequence>
<proteinExistence type="inferred from homology"/>
<organism>
    <name type="scientific">Human adenovirus C serotype 5</name>
    <name type="common">HAdV-5</name>
    <name type="synonym">Human adenovirus 5</name>
    <dbReference type="NCBI Taxonomy" id="28285"/>
    <lineage>
        <taxon>Viruses</taxon>
        <taxon>Varidnaviria</taxon>
        <taxon>Bamfordvirae</taxon>
        <taxon>Preplasmiviricota</taxon>
        <taxon>Tectiliviricetes</taxon>
        <taxon>Rowavirales</taxon>
        <taxon>Adenoviridae</taxon>
        <taxon>Mastadenovirus</taxon>
        <taxon>Human mastadenovirus C</taxon>
    </lineage>
</organism>
<keyword id="KW-0244">Early protein</keyword>
<keyword id="KW-0325">Glycoprotein</keyword>
<keyword id="KW-1043">Host membrane</keyword>
<keyword id="KW-1048">Host nucleus</keyword>
<keyword id="KW-0472">Membrane</keyword>
<keyword id="KW-1185">Reference proteome</keyword>
<keyword id="KW-0812">Transmembrane</keyword>
<keyword id="KW-1133">Transmembrane helix</keyword>
<accession>P17590</accession>